<reference evidence="7" key="1">
    <citation type="journal article" date="2013" name="Nature">
        <title>The zebrafish reference genome sequence and its relationship to the human genome.</title>
        <authorList>
            <person name="Howe K."/>
            <person name="Clark M.D."/>
            <person name="Torroja C.F."/>
            <person name="Torrance J."/>
            <person name="Berthelot C."/>
            <person name="Muffato M."/>
            <person name="Collins J.E."/>
            <person name="Humphray S."/>
            <person name="McLaren K."/>
            <person name="Matthews L."/>
            <person name="McLaren S."/>
            <person name="Sealy I."/>
            <person name="Caccamo M."/>
            <person name="Churcher C."/>
            <person name="Scott C."/>
            <person name="Barrett J.C."/>
            <person name="Koch R."/>
            <person name="Rauch G.J."/>
            <person name="White S."/>
            <person name="Chow W."/>
            <person name="Kilian B."/>
            <person name="Quintais L.T."/>
            <person name="Guerra-Assuncao J.A."/>
            <person name="Zhou Y."/>
            <person name="Gu Y."/>
            <person name="Yen J."/>
            <person name="Vogel J.H."/>
            <person name="Eyre T."/>
            <person name="Redmond S."/>
            <person name="Banerjee R."/>
            <person name="Chi J."/>
            <person name="Fu B."/>
            <person name="Langley E."/>
            <person name="Maguire S.F."/>
            <person name="Laird G.K."/>
            <person name="Lloyd D."/>
            <person name="Kenyon E."/>
            <person name="Donaldson S."/>
            <person name="Sehra H."/>
            <person name="Almeida-King J."/>
            <person name="Loveland J."/>
            <person name="Trevanion S."/>
            <person name="Jones M."/>
            <person name="Quail M."/>
            <person name="Willey D."/>
            <person name="Hunt A."/>
            <person name="Burton J."/>
            <person name="Sims S."/>
            <person name="McLay K."/>
            <person name="Plumb B."/>
            <person name="Davis J."/>
            <person name="Clee C."/>
            <person name="Oliver K."/>
            <person name="Clark R."/>
            <person name="Riddle C."/>
            <person name="Elliot D."/>
            <person name="Threadgold G."/>
            <person name="Harden G."/>
            <person name="Ware D."/>
            <person name="Begum S."/>
            <person name="Mortimore B."/>
            <person name="Kerry G."/>
            <person name="Heath P."/>
            <person name="Phillimore B."/>
            <person name="Tracey A."/>
            <person name="Corby N."/>
            <person name="Dunn M."/>
            <person name="Johnson C."/>
            <person name="Wood J."/>
            <person name="Clark S."/>
            <person name="Pelan S."/>
            <person name="Griffiths G."/>
            <person name="Smith M."/>
            <person name="Glithero R."/>
            <person name="Howden P."/>
            <person name="Barker N."/>
            <person name="Lloyd C."/>
            <person name="Stevens C."/>
            <person name="Harley J."/>
            <person name="Holt K."/>
            <person name="Panagiotidis G."/>
            <person name="Lovell J."/>
            <person name="Beasley H."/>
            <person name="Henderson C."/>
            <person name="Gordon D."/>
            <person name="Auger K."/>
            <person name="Wright D."/>
            <person name="Collins J."/>
            <person name="Raisen C."/>
            <person name="Dyer L."/>
            <person name="Leung K."/>
            <person name="Robertson L."/>
            <person name="Ambridge K."/>
            <person name="Leongamornlert D."/>
            <person name="McGuire S."/>
            <person name="Gilderthorp R."/>
            <person name="Griffiths C."/>
            <person name="Manthravadi D."/>
            <person name="Nichol S."/>
            <person name="Barker G."/>
            <person name="Whitehead S."/>
            <person name="Kay M."/>
            <person name="Brown J."/>
            <person name="Murnane C."/>
            <person name="Gray E."/>
            <person name="Humphries M."/>
            <person name="Sycamore N."/>
            <person name="Barker D."/>
            <person name="Saunders D."/>
            <person name="Wallis J."/>
            <person name="Babbage A."/>
            <person name="Hammond S."/>
            <person name="Mashreghi-Mohammadi M."/>
            <person name="Barr L."/>
            <person name="Martin S."/>
            <person name="Wray P."/>
            <person name="Ellington A."/>
            <person name="Matthews N."/>
            <person name="Ellwood M."/>
            <person name="Woodmansey R."/>
            <person name="Clark G."/>
            <person name="Cooper J."/>
            <person name="Tromans A."/>
            <person name="Grafham D."/>
            <person name="Skuce C."/>
            <person name="Pandian R."/>
            <person name="Andrews R."/>
            <person name="Harrison E."/>
            <person name="Kimberley A."/>
            <person name="Garnett J."/>
            <person name="Fosker N."/>
            <person name="Hall R."/>
            <person name="Garner P."/>
            <person name="Kelly D."/>
            <person name="Bird C."/>
            <person name="Palmer S."/>
            <person name="Gehring I."/>
            <person name="Berger A."/>
            <person name="Dooley C.M."/>
            <person name="Ersan-Urun Z."/>
            <person name="Eser C."/>
            <person name="Geiger H."/>
            <person name="Geisler M."/>
            <person name="Karotki L."/>
            <person name="Kirn A."/>
            <person name="Konantz J."/>
            <person name="Konantz M."/>
            <person name="Oberlander M."/>
            <person name="Rudolph-Geiger S."/>
            <person name="Teucke M."/>
            <person name="Lanz C."/>
            <person name="Raddatz G."/>
            <person name="Osoegawa K."/>
            <person name="Zhu B."/>
            <person name="Rapp A."/>
            <person name="Widaa S."/>
            <person name="Langford C."/>
            <person name="Yang F."/>
            <person name="Schuster S.C."/>
            <person name="Carter N.P."/>
            <person name="Harrow J."/>
            <person name="Ning Z."/>
            <person name="Herrero J."/>
            <person name="Searle S.M."/>
            <person name="Enright A."/>
            <person name="Geisler R."/>
            <person name="Plasterk R.H."/>
            <person name="Lee C."/>
            <person name="Westerfield M."/>
            <person name="de Jong P.J."/>
            <person name="Zon L.I."/>
            <person name="Postlethwait J.H."/>
            <person name="Nusslein-Volhard C."/>
            <person name="Hubbard T.J."/>
            <person name="Roest Crollius H."/>
            <person name="Rogers J."/>
            <person name="Stemple D.L."/>
        </authorList>
    </citation>
    <scope>NUCLEOTIDE SEQUENCE [LARGE SCALE GENOMIC DNA]</scope>
    <source>
        <strain evidence="7">Tuebingen</strain>
    </source>
</reference>
<reference evidence="6" key="2">
    <citation type="journal article" date="2009" name="Mol. Cell. Biol.">
        <title>Nonsense-mediated mRNA decay effectors are essential for zebrafish embryonic development and survival.</title>
        <authorList>
            <person name="Wittkopp N."/>
            <person name="Huntzinger E."/>
            <person name="Weiler C."/>
            <person name="Sauliere J."/>
            <person name="Schmidt S."/>
            <person name="Sonawane M."/>
            <person name="Izaurralde E."/>
        </authorList>
    </citation>
    <scope>NUCLEOTIDE SEQUENCE [MRNA] OF 93-519</scope>
    <scope>FUNCTION</scope>
    <scope>DEVELOPMENTAL STAGE</scope>
    <scope>DISRUPTION PHENOTYPE</scope>
</reference>
<keyword id="KW-0158">Chromosome</keyword>
<keyword id="KW-0963">Cytoplasm</keyword>
<keyword id="KW-0255">Endonuclease</keyword>
<keyword id="KW-0378">Hydrolase</keyword>
<keyword id="KW-0866">Nonsense-mediated mRNA decay</keyword>
<keyword id="KW-0540">Nuclease</keyword>
<keyword id="KW-0539">Nucleus</keyword>
<keyword id="KW-1185">Reference proteome</keyword>
<keyword id="KW-0779">Telomere</keyword>
<sequence length="1544" mass="172241">MADELERVRISAAELRAQASSFNIHGDDVKDLREEGKKQRQRDSKRPDLQLYKPGVGHPNRRMDSVEGAGSDTLIQPDGFGNDPKMSDESPTSPGCSYMPGTGNEDYLNDHSKPETNHKTDGHIGGDKHKLVDENAVKIIERAGTPKSPKQSRKMRKPDRQIYQPGGRRSQGNKEVGASKELDRDRSREEEVDGKSIETPLKCEKEEKRKNRRGKNDRKKQASVETPSANKTENAVENISNKVSNLHLETVESKDRDRQDDTNQIKHSEEGRKIQTGGANRGMGEDKKKERGNGKSRPGKEKGNNQVFDKKEEGEAGGKASEAPHLEGRKQRNFGAKEASRDQNLNHEKQQGNRPKEKGKPSERTDSKRVNAASKRYSQSDIRRPRNRTYSTSSASSGTSMDGLAEAERLKAEGQQFSARTLERATGQREFVRGGQTRSRRRTARTLSSTDSLEENEVWEREGRRSRAAEEAKSSTRKEGGILRVSLDKREEQASRKSTRGRGRGILVLPAHTDLTQTPDPAPPLGGMRGGMGLGRGRGGRGGGTRRLWDPNNPDKKPALVSSQQSQHASQHQALYLQQGGCGPLHFLDTDDETVGSPPVRQGEFFQNQQAAAMAYYKFQNSDNPYCYPVSANSPNTPPRYPYPYQIPYQIPGSNGMYPASAMTSFYGPYGQGGPGYPSPTVSALTPEEAEVQTRGELGKFLRLADSQELQLSNLLSRERLSQEGLERMAQLRAELLTIYERVILTDIEFSDSQNVDQTLWKNVFYQVIERFRQLLKDQNSDTAPQIKTMLMTILEEGAVFFDSLLQKLQSVFQFKLQDYMDCMAIRARPLRKTVKYALISAQRCMICQGDIARYREQASESANYGKARSWYLKAQQIAPKNGRPYNQLALLAVYTKRKLDAVYYYMRSLAASNPILTAKESLMSLFEEAKRKADQVERRLKQDSDGSAHGPKGHTGGRRGEDAARVEIWIRPSEVSGTSRPTGSESGKDSEQDGELGALSASDLNKRFILSFLHAHGKLFTKVGMESFPAVANRVLLEFRALLQHSPSPLGSTRMLQIITINMFTIYNAQIRAKGQGETRSALEEQAISLGLAMFGLLVQRCTELLKETPTEPIPAEELGEFDEMDDEEGMVRVSVFPHDLRELLPSMKVWSDWMLGHPEKWNPPPCSMQGSPDVWQCLADLCNSFSRVYHGEVLLYKADADGEGDEELRVLQLEEDKMLSGFVPLLAAPQDACYTDQGTDAAIAADCKRVTVLKYFLEALCGQEEPLLAFKGGKYISMAAPLTPSINTENKAQEQEDDVIVEESSLSASEGEIDGEMEGDGSEDDIRELRARRHALAHKLAQQQKRRDKIQAVLQTGGQLEIEVRPFYLVPDTNGFIDHLEGLRKLLACGTYILVVPLIVITELDGLAKGQDSREGVGNGAHARQVQDRARAAVMFLEKAFESRDPSIRALTSRGNTLESIAFRSEDTSGQKGNNDDVILSCCLHYCQDKAKDFMPAERNGPVRLRREVVLLTDDRNLRVKALTRNVPVRDIPAFLIWAKVG</sequence>
<protein>
    <recommendedName>
        <fullName evidence="5">Telomerase-binding protein EST1A</fullName>
        <ecNumber>3.1.-.-</ecNumber>
    </recommendedName>
    <alternativeName>
        <fullName evidence="1">Ever shorter telomeres 1A</fullName>
    </alternativeName>
    <alternativeName>
        <fullName>Nonsense mediated mRNA decay factor SMG6</fullName>
    </alternativeName>
    <alternativeName>
        <fullName evidence="1">Smg-6 homolog</fullName>
    </alternativeName>
</protein>
<proteinExistence type="evidence at transcript level"/>
<feature type="chain" id="PRO_0000454183" description="Telomerase-binding protein EST1A">
    <location>
        <begin position="1"/>
        <end position="1544"/>
    </location>
</feature>
<feature type="domain" description="PINc" evidence="2">
    <location>
        <begin position="1369"/>
        <end position="1522"/>
    </location>
</feature>
<feature type="region of interest" description="Disordered" evidence="3">
    <location>
        <begin position="25"/>
        <end position="503"/>
    </location>
</feature>
<feature type="region of interest" description="Disordered" evidence="3">
    <location>
        <begin position="536"/>
        <end position="573"/>
    </location>
</feature>
<feature type="region of interest" description="Disordered" evidence="3">
    <location>
        <begin position="936"/>
        <end position="964"/>
    </location>
</feature>
<feature type="region of interest" description="Disordered" evidence="3">
    <location>
        <begin position="976"/>
        <end position="996"/>
    </location>
</feature>
<feature type="compositionally biased region" description="Basic and acidic residues" evidence="3">
    <location>
        <begin position="25"/>
        <end position="48"/>
    </location>
</feature>
<feature type="compositionally biased region" description="Basic and acidic residues" evidence="3">
    <location>
        <begin position="108"/>
        <end position="141"/>
    </location>
</feature>
<feature type="compositionally biased region" description="Basic and acidic residues" evidence="3">
    <location>
        <begin position="177"/>
        <end position="209"/>
    </location>
</feature>
<feature type="compositionally biased region" description="Polar residues" evidence="3">
    <location>
        <begin position="223"/>
        <end position="244"/>
    </location>
</feature>
<feature type="compositionally biased region" description="Basic and acidic residues" evidence="3">
    <location>
        <begin position="249"/>
        <end position="273"/>
    </location>
</feature>
<feature type="compositionally biased region" description="Basic and acidic residues" evidence="3">
    <location>
        <begin position="283"/>
        <end position="330"/>
    </location>
</feature>
<feature type="compositionally biased region" description="Basic and acidic residues" evidence="3">
    <location>
        <begin position="338"/>
        <end position="369"/>
    </location>
</feature>
<feature type="compositionally biased region" description="Low complexity" evidence="3">
    <location>
        <begin position="389"/>
        <end position="400"/>
    </location>
</feature>
<feature type="compositionally biased region" description="Basic and acidic residues" evidence="3">
    <location>
        <begin position="421"/>
        <end position="432"/>
    </location>
</feature>
<feature type="compositionally biased region" description="Basic and acidic residues" evidence="3">
    <location>
        <begin position="458"/>
        <end position="495"/>
    </location>
</feature>
<feature type="compositionally biased region" description="Gly residues" evidence="3">
    <location>
        <begin position="536"/>
        <end position="545"/>
    </location>
</feature>
<feature type="compositionally biased region" description="Basic and acidic residues" evidence="3">
    <location>
        <begin position="547"/>
        <end position="558"/>
    </location>
</feature>
<feature type="compositionally biased region" description="Low complexity" evidence="3">
    <location>
        <begin position="562"/>
        <end position="573"/>
    </location>
</feature>
<feature type="compositionally biased region" description="Basic and acidic residues" evidence="3">
    <location>
        <begin position="936"/>
        <end position="947"/>
    </location>
</feature>
<feature type="compositionally biased region" description="Polar residues" evidence="3">
    <location>
        <begin position="976"/>
        <end position="986"/>
    </location>
</feature>
<feature type="sequence conflict" description="In Ref. 2; CAX18775." evidence="5" ref="2">
    <original>G</original>
    <variation>E</variation>
    <location>
        <position position="177"/>
    </location>
</feature>
<feature type="sequence conflict" description="In Ref. 2; CAX18775." evidence="5" ref="2">
    <original>P</original>
    <variation>L</variation>
    <location>
        <position position="200"/>
    </location>
</feature>
<feature type="sequence conflict" description="In Ref. 2; CAX18775." evidence="5" ref="2">
    <original>H</original>
    <variation>N</variation>
    <location>
        <position position="247"/>
    </location>
</feature>
<feature type="sequence conflict" description="In Ref. 2; CAX18775." evidence="5" ref="2">
    <original>RQDDTNQI</original>
    <variation>GQDDSNQS</variation>
    <location>
        <begin position="258"/>
        <end position="265"/>
    </location>
</feature>
<feature type="sequence conflict" description="In Ref. 2; CAX18775." evidence="5" ref="2">
    <original>P</original>
    <variation>A</variation>
    <location>
        <position position="298"/>
    </location>
</feature>
<feature type="sequence conflict" description="In Ref. 2; CAX18775." evidence="5" ref="2">
    <original>K</original>
    <variation>R</variation>
    <location>
        <position position="356"/>
    </location>
</feature>
<feature type="sequence conflict" description="In Ref. 2; CAX18775." evidence="5" ref="2">
    <original>A</original>
    <variation>S</variation>
    <location>
        <position position="372"/>
    </location>
</feature>
<feature type="sequence conflict" description="In Ref. 2; CAX18775." evidence="5" ref="2">
    <original>I</original>
    <variation>M</variation>
    <location>
        <position position="382"/>
    </location>
</feature>
<evidence type="ECO:0000250" key="1">
    <source>
        <dbReference type="UniProtKB" id="Q86US8"/>
    </source>
</evidence>
<evidence type="ECO:0000255" key="2"/>
<evidence type="ECO:0000256" key="3">
    <source>
        <dbReference type="SAM" id="MobiDB-lite"/>
    </source>
</evidence>
<evidence type="ECO:0000269" key="4">
    <source>
    </source>
</evidence>
<evidence type="ECO:0000305" key="5"/>
<evidence type="ECO:0000312" key="6">
    <source>
        <dbReference type="EMBL" id="CAX18775.1"/>
    </source>
</evidence>
<evidence type="ECO:0000312" key="7">
    <source>
        <dbReference type="Proteomes" id="UP000000437"/>
    </source>
</evidence>
<dbReference type="EC" id="3.1.-.-"/>
<dbReference type="EMBL" id="BX663516">
    <property type="status" value="NOT_ANNOTATED_CDS"/>
    <property type="molecule type" value="Genomic_DNA"/>
</dbReference>
<dbReference type="EMBL" id="CR925771">
    <property type="status" value="NOT_ANNOTATED_CDS"/>
    <property type="molecule type" value="Genomic_DNA"/>
</dbReference>
<dbReference type="EMBL" id="FM986822">
    <property type="protein sequence ID" value="CAX18775.1"/>
    <property type="molecule type" value="mRNA"/>
</dbReference>
<dbReference type="SMR" id="A0A0R4IZ84"/>
<dbReference type="FunCoup" id="A0A0R4IZ84">
    <property type="interactions" value="2003"/>
</dbReference>
<dbReference type="STRING" id="7955.ENSDARP00000140752"/>
<dbReference type="PaxDb" id="7955-ENSDARP00000116550"/>
<dbReference type="Ensembl" id="ENSDART00000158537">
    <property type="protein sequence ID" value="ENSDARP00000140752"/>
    <property type="gene ID" value="ENSDARG00000100481"/>
</dbReference>
<dbReference type="AGR" id="ZFIN:ZDB-GENE-081107-52"/>
<dbReference type="ZFIN" id="ZDB-GENE-081107-52">
    <property type="gene designation" value="smg6"/>
</dbReference>
<dbReference type="eggNOG" id="KOG2162">
    <property type="taxonomic scope" value="Eukaryota"/>
</dbReference>
<dbReference type="InParanoid" id="A0A0R4IZ84"/>
<dbReference type="OMA" id="CSPDVWQ"/>
<dbReference type="OrthoDB" id="2017974at2759"/>
<dbReference type="Reactome" id="R-DRE-975957">
    <property type="pathway name" value="Nonsense Mediated Decay (NMD) enhanced by the Exon Junction Complex (EJC)"/>
</dbReference>
<dbReference type="PRO" id="PR:A0A0R4IZ84"/>
<dbReference type="Proteomes" id="UP000000437">
    <property type="component" value="Unplaced"/>
</dbReference>
<dbReference type="Bgee" id="ENSDARG00000100481">
    <property type="expression patterns" value="Expressed in mature ovarian follicle and 21 other cell types or tissues"/>
</dbReference>
<dbReference type="GO" id="GO:0000781">
    <property type="term" value="C:chromosome, telomeric region"/>
    <property type="evidence" value="ECO:0007669"/>
    <property type="project" value="UniProtKB-SubCell"/>
</dbReference>
<dbReference type="GO" id="GO:0005829">
    <property type="term" value="C:cytosol"/>
    <property type="evidence" value="ECO:0007669"/>
    <property type="project" value="UniProtKB-SubCell"/>
</dbReference>
<dbReference type="GO" id="GO:0005730">
    <property type="term" value="C:nucleolus"/>
    <property type="evidence" value="ECO:0007669"/>
    <property type="project" value="UniProtKB-SubCell"/>
</dbReference>
<dbReference type="GO" id="GO:0005697">
    <property type="term" value="C:telomerase holoenzyme complex"/>
    <property type="evidence" value="ECO:0000318"/>
    <property type="project" value="GO_Central"/>
</dbReference>
<dbReference type="GO" id="GO:0004519">
    <property type="term" value="F:endonuclease activity"/>
    <property type="evidence" value="ECO:0007669"/>
    <property type="project" value="UniProtKB-KW"/>
</dbReference>
<dbReference type="GO" id="GO:0070034">
    <property type="term" value="F:telomerase RNA binding"/>
    <property type="evidence" value="ECO:0000318"/>
    <property type="project" value="GO_Central"/>
</dbReference>
<dbReference type="GO" id="GO:0042162">
    <property type="term" value="F:telomeric DNA binding"/>
    <property type="evidence" value="ECO:0000318"/>
    <property type="project" value="GO_Central"/>
</dbReference>
<dbReference type="GO" id="GO:0043009">
    <property type="term" value="P:chordate embryonic development"/>
    <property type="evidence" value="ECO:0000315"/>
    <property type="project" value="ZFIN"/>
</dbReference>
<dbReference type="GO" id="GO:0000184">
    <property type="term" value="P:nuclear-transcribed mRNA catabolic process, nonsense-mediated decay"/>
    <property type="evidence" value="ECO:0000314"/>
    <property type="project" value="ZFIN"/>
</dbReference>
<dbReference type="CDD" id="cd09885">
    <property type="entry name" value="PIN_Smg6-like"/>
    <property type="match status" value="1"/>
</dbReference>
<dbReference type="FunFam" id="1.25.40.10:FF:000094">
    <property type="entry name" value="telomerase-binding protein EST1A isoform X1"/>
    <property type="match status" value="1"/>
</dbReference>
<dbReference type="FunFam" id="3.40.50.1010:FF:000014">
    <property type="entry name" value="telomerase-binding protein EST1A isoform X1"/>
    <property type="match status" value="1"/>
</dbReference>
<dbReference type="Gene3D" id="3.40.50.1010">
    <property type="entry name" value="5'-nuclease"/>
    <property type="match status" value="1"/>
</dbReference>
<dbReference type="Gene3D" id="1.25.40.10">
    <property type="entry name" value="Tetratricopeptide repeat domain"/>
    <property type="match status" value="1"/>
</dbReference>
<dbReference type="InterPro" id="IPR018834">
    <property type="entry name" value="DNA/RNA-bd_Est1-type"/>
</dbReference>
<dbReference type="InterPro" id="IPR019458">
    <property type="entry name" value="Est1-like_N"/>
</dbReference>
<dbReference type="InterPro" id="IPR045153">
    <property type="entry name" value="Est1/Ebs1-like"/>
</dbReference>
<dbReference type="InterPro" id="IPR029060">
    <property type="entry name" value="PIN-like_dom_sf"/>
</dbReference>
<dbReference type="InterPro" id="IPR002716">
    <property type="entry name" value="PIN_dom"/>
</dbReference>
<dbReference type="InterPro" id="IPR011990">
    <property type="entry name" value="TPR-like_helical_dom_sf"/>
</dbReference>
<dbReference type="PANTHER" id="PTHR15696">
    <property type="entry name" value="SMG-7 SUPPRESSOR WITH MORPHOLOGICAL EFFECT ON GENITALIA PROTEIN 7"/>
    <property type="match status" value="1"/>
</dbReference>
<dbReference type="PANTHER" id="PTHR15696:SF0">
    <property type="entry name" value="TELOMERASE-BINDING PROTEIN EST1A"/>
    <property type="match status" value="1"/>
</dbReference>
<dbReference type="Pfam" id="PF10374">
    <property type="entry name" value="EST1"/>
    <property type="match status" value="1"/>
</dbReference>
<dbReference type="Pfam" id="PF10373">
    <property type="entry name" value="EST1_DNA_bind"/>
    <property type="match status" value="1"/>
</dbReference>
<dbReference type="Pfam" id="PF13638">
    <property type="entry name" value="PIN_4"/>
    <property type="match status" value="1"/>
</dbReference>
<dbReference type="SMART" id="SM00670">
    <property type="entry name" value="PINc"/>
    <property type="match status" value="1"/>
</dbReference>
<dbReference type="SUPFAM" id="SSF88723">
    <property type="entry name" value="PIN domain-like"/>
    <property type="match status" value="1"/>
</dbReference>
<dbReference type="SUPFAM" id="SSF48452">
    <property type="entry name" value="TPR-like"/>
    <property type="match status" value="1"/>
</dbReference>
<organism evidence="7">
    <name type="scientific">Danio rerio</name>
    <name type="common">Zebrafish</name>
    <name type="synonym">Brachydanio rerio</name>
    <dbReference type="NCBI Taxonomy" id="7955"/>
    <lineage>
        <taxon>Eukaryota</taxon>
        <taxon>Metazoa</taxon>
        <taxon>Chordata</taxon>
        <taxon>Craniata</taxon>
        <taxon>Vertebrata</taxon>
        <taxon>Euteleostomi</taxon>
        <taxon>Actinopterygii</taxon>
        <taxon>Neopterygii</taxon>
        <taxon>Teleostei</taxon>
        <taxon>Ostariophysi</taxon>
        <taxon>Cypriniformes</taxon>
        <taxon>Danionidae</taxon>
        <taxon>Danioninae</taxon>
        <taxon>Danio</taxon>
    </lineage>
</organism>
<accession>A0A0R4IZ84</accession>
<accession>C5J7W9</accession>
<gene>
    <name type="primary">smg6</name>
    <name evidence="1" type="synonym">est1a</name>
</gene>
<comment type="function">
    <text evidence="1 4">Component of the telomerase ribonucleoprotein (RNP) complex that is essential for the replication of chromosome termini (By similarity). Required for normal embryonic development (PubMed:19414594).</text>
</comment>
<comment type="function">
    <text evidence="1">Plays a role in nonsense-mediated mRNA decay.</text>
</comment>
<comment type="cofactor">
    <cofactor evidence="1">
        <name>Mn(2+)</name>
        <dbReference type="ChEBI" id="CHEBI:29035"/>
    </cofactor>
</comment>
<comment type="subunit">
    <text evidence="1">May form homooligomers (By similarity). Associated component of the telomerase holoenzyme complex (By similarity).</text>
</comment>
<comment type="subcellular location">
    <subcellularLocation>
        <location evidence="1">Nucleus</location>
        <location evidence="1">Nucleolus</location>
    </subcellularLocation>
    <subcellularLocation>
        <location evidence="1">Chromosome</location>
        <location evidence="1">Telomere</location>
    </subcellularLocation>
    <subcellularLocation>
        <location evidence="1">Cytoplasm</location>
        <location evidence="1">Cytosol</location>
    </subcellularLocation>
</comment>
<comment type="developmental stage">
    <text evidence="4">Expressed during early cleavage, gastrulation and at 1 day post-fertilization.</text>
</comment>
<comment type="domain">
    <text evidence="1">The PINc domain confers endonuclease activity and is expected to bind the catalytic metal ion.</text>
</comment>
<comment type="disruption phenotype">
    <text evidence="4">Morpholino knockdown leads to a phenotype ranging in severity from weak to severe that are developmentally delayed with disturbed brain patterning, necrosis in areas of the brain, aberrant eye development, impaired somitogenesis resulting in stacked somites, perturbed yolk sac extension and posterior axis extension with a high mortality rate of 93% at 5 days post-fertilization.</text>
</comment>
<name>EST1A_DANRE</name>